<sequence length="349" mass="36808">MLDLSLPSGLRDLLPDHSAHLAELSSKLHDVFSRFGYRRVFLPTLERLDVVERGLSPAALADVMKFVEPGSGEVVAIRPDITPQIARLYAARPDALPSPARLCYDGPVLRAREARAGRPREVYQAGVELLGAGGASADAEALVLLARSLERVGLKAPRVEVGHARFAEAVMEAARLPQRLRSAAWEALSRKDRAALGAAAAKGRGSSEAREAVPQLAGLFGDGALDRARAIARAVPGAAAPLAETEAALRIARRRGVREVAVDLGEARGLGYYTGITFAGYAPGAGAAVARGGRYDGLLARFGRPGPAIGFAVDLEFATQALERANGRGRGVRPRRASARGGRAGTRPR</sequence>
<protein>
    <recommendedName>
        <fullName evidence="1">ATP phosphoribosyltransferase regulatory subunit</fullName>
    </recommendedName>
</protein>
<comment type="function">
    <text evidence="1">Required for the first step of histidine biosynthesis. May allow the feedback regulation of ATP phosphoribosyltransferase activity by histidine.</text>
</comment>
<comment type="pathway">
    <text evidence="1">Amino-acid biosynthesis; L-histidine biosynthesis; L-histidine from 5-phospho-alpha-D-ribose 1-diphosphate: step 1/9.</text>
</comment>
<comment type="subunit">
    <text evidence="1">Heteromultimer composed of HisG and HisZ subunits.</text>
</comment>
<comment type="subcellular location">
    <subcellularLocation>
        <location evidence="1">Cytoplasm</location>
    </subcellularLocation>
</comment>
<comment type="miscellaneous">
    <text>This function is generally fulfilled by the C-terminal part of HisG, which is missing in some bacteria such as this one.</text>
</comment>
<comment type="similarity">
    <text evidence="1">Belongs to the class-II aminoacyl-tRNA synthetase family. HisZ subfamily.</text>
</comment>
<name>HISZ_ANADE</name>
<reference key="1">
    <citation type="submission" date="2006-01" db="EMBL/GenBank/DDBJ databases">
        <title>Complete sequence of Anaeromyxobacter dehalogenans 2CP-C.</title>
        <authorList>
            <person name="Copeland A."/>
            <person name="Lucas S."/>
            <person name="Lapidus A."/>
            <person name="Barry K."/>
            <person name="Detter J.C."/>
            <person name="Glavina T."/>
            <person name="Hammon N."/>
            <person name="Israni S."/>
            <person name="Pitluck S."/>
            <person name="Brettin T."/>
            <person name="Bruce D."/>
            <person name="Han C."/>
            <person name="Tapia R."/>
            <person name="Gilna P."/>
            <person name="Kiss H."/>
            <person name="Schmutz J."/>
            <person name="Larimer F."/>
            <person name="Land M."/>
            <person name="Kyrpides N."/>
            <person name="Anderson I."/>
            <person name="Sanford R.A."/>
            <person name="Ritalahti K.M."/>
            <person name="Thomas H.S."/>
            <person name="Kirby J.R."/>
            <person name="Zhulin I.B."/>
            <person name="Loeffler F.E."/>
            <person name="Richardson P."/>
        </authorList>
    </citation>
    <scope>NUCLEOTIDE SEQUENCE [LARGE SCALE GENOMIC DNA]</scope>
    <source>
        <strain>2CP-C</strain>
    </source>
</reference>
<gene>
    <name evidence="1" type="primary">hisZ</name>
    <name type="ordered locus">Adeh_1264</name>
</gene>
<proteinExistence type="inferred from homology"/>
<feature type="chain" id="PRO_0000242817" description="ATP phosphoribosyltransferase regulatory subunit">
    <location>
        <begin position="1"/>
        <end position="349"/>
    </location>
</feature>
<feature type="region of interest" description="Disordered" evidence="2">
    <location>
        <begin position="325"/>
        <end position="349"/>
    </location>
</feature>
<feature type="compositionally biased region" description="Low complexity" evidence="2">
    <location>
        <begin position="339"/>
        <end position="349"/>
    </location>
</feature>
<keyword id="KW-0028">Amino-acid biosynthesis</keyword>
<keyword id="KW-0963">Cytoplasm</keyword>
<keyword id="KW-0368">Histidine biosynthesis</keyword>
<keyword id="KW-1185">Reference proteome</keyword>
<evidence type="ECO:0000255" key="1">
    <source>
        <dbReference type="HAMAP-Rule" id="MF_00125"/>
    </source>
</evidence>
<evidence type="ECO:0000256" key="2">
    <source>
        <dbReference type="SAM" id="MobiDB-lite"/>
    </source>
</evidence>
<dbReference type="EMBL" id="CP000251">
    <property type="protein sequence ID" value="ABC81038.1"/>
    <property type="molecule type" value="Genomic_DNA"/>
</dbReference>
<dbReference type="RefSeq" id="WP_011420321.1">
    <property type="nucleotide sequence ID" value="NC_007760.1"/>
</dbReference>
<dbReference type="SMR" id="Q2IQF8"/>
<dbReference type="STRING" id="290397.Adeh_1264"/>
<dbReference type="KEGG" id="ade:Adeh_1264"/>
<dbReference type="eggNOG" id="COG3705">
    <property type="taxonomic scope" value="Bacteria"/>
</dbReference>
<dbReference type="HOGENOM" id="CLU_025113_0_3_7"/>
<dbReference type="OrthoDB" id="9800814at2"/>
<dbReference type="UniPathway" id="UPA00031">
    <property type="reaction ID" value="UER00006"/>
</dbReference>
<dbReference type="Proteomes" id="UP000001935">
    <property type="component" value="Chromosome"/>
</dbReference>
<dbReference type="GO" id="GO:0005737">
    <property type="term" value="C:cytoplasm"/>
    <property type="evidence" value="ECO:0007669"/>
    <property type="project" value="UniProtKB-SubCell"/>
</dbReference>
<dbReference type="GO" id="GO:0004821">
    <property type="term" value="F:histidine-tRNA ligase activity"/>
    <property type="evidence" value="ECO:0007669"/>
    <property type="project" value="TreeGrafter"/>
</dbReference>
<dbReference type="GO" id="GO:0006427">
    <property type="term" value="P:histidyl-tRNA aminoacylation"/>
    <property type="evidence" value="ECO:0007669"/>
    <property type="project" value="TreeGrafter"/>
</dbReference>
<dbReference type="GO" id="GO:0000105">
    <property type="term" value="P:L-histidine biosynthetic process"/>
    <property type="evidence" value="ECO:0007669"/>
    <property type="project" value="UniProtKB-UniRule"/>
</dbReference>
<dbReference type="CDD" id="cd00773">
    <property type="entry name" value="HisRS-like_core"/>
    <property type="match status" value="1"/>
</dbReference>
<dbReference type="Gene3D" id="3.30.930.10">
    <property type="entry name" value="Bira Bifunctional Protein, Domain 2"/>
    <property type="match status" value="1"/>
</dbReference>
<dbReference type="HAMAP" id="MF_00125">
    <property type="entry name" value="HisZ"/>
    <property type="match status" value="1"/>
</dbReference>
<dbReference type="InterPro" id="IPR006195">
    <property type="entry name" value="aa-tRNA-synth_II"/>
</dbReference>
<dbReference type="InterPro" id="IPR045864">
    <property type="entry name" value="aa-tRNA-synth_II/BPL/LPL"/>
</dbReference>
<dbReference type="InterPro" id="IPR041715">
    <property type="entry name" value="HisRS-like_core"/>
</dbReference>
<dbReference type="InterPro" id="IPR004516">
    <property type="entry name" value="HisRS/HisZ"/>
</dbReference>
<dbReference type="InterPro" id="IPR004517">
    <property type="entry name" value="HisZ"/>
</dbReference>
<dbReference type="NCBIfam" id="TIGR00443">
    <property type="entry name" value="hisZ_biosyn_reg"/>
    <property type="match status" value="1"/>
</dbReference>
<dbReference type="PANTHER" id="PTHR43707:SF1">
    <property type="entry name" value="HISTIDINE--TRNA LIGASE, MITOCHONDRIAL-RELATED"/>
    <property type="match status" value="1"/>
</dbReference>
<dbReference type="PANTHER" id="PTHR43707">
    <property type="entry name" value="HISTIDYL-TRNA SYNTHETASE"/>
    <property type="match status" value="1"/>
</dbReference>
<dbReference type="Pfam" id="PF13393">
    <property type="entry name" value="tRNA-synt_His"/>
    <property type="match status" value="1"/>
</dbReference>
<dbReference type="PIRSF" id="PIRSF001549">
    <property type="entry name" value="His-tRNA_synth"/>
    <property type="match status" value="1"/>
</dbReference>
<dbReference type="SUPFAM" id="SSF55681">
    <property type="entry name" value="Class II aaRS and biotin synthetases"/>
    <property type="match status" value="1"/>
</dbReference>
<dbReference type="PROSITE" id="PS50862">
    <property type="entry name" value="AA_TRNA_LIGASE_II"/>
    <property type="match status" value="1"/>
</dbReference>
<organism>
    <name type="scientific">Anaeromyxobacter dehalogenans (strain 2CP-C)</name>
    <dbReference type="NCBI Taxonomy" id="290397"/>
    <lineage>
        <taxon>Bacteria</taxon>
        <taxon>Pseudomonadati</taxon>
        <taxon>Myxococcota</taxon>
        <taxon>Myxococcia</taxon>
        <taxon>Myxococcales</taxon>
        <taxon>Cystobacterineae</taxon>
        <taxon>Anaeromyxobacteraceae</taxon>
        <taxon>Anaeromyxobacter</taxon>
    </lineage>
</organism>
<accession>Q2IQF8</accession>